<evidence type="ECO:0000255" key="1">
    <source>
        <dbReference type="HAMAP-Rule" id="MF_01572"/>
    </source>
</evidence>
<dbReference type="EMBL" id="AE016879">
    <property type="protein sequence ID" value="AAP26488.1"/>
    <property type="molecule type" value="Genomic_DNA"/>
</dbReference>
<dbReference type="EMBL" id="AE017225">
    <property type="protein sequence ID" value="AAT54771.1"/>
    <property type="molecule type" value="Genomic_DNA"/>
</dbReference>
<dbReference type="EMBL" id="AE017334">
    <property type="protein sequence ID" value="AAT31756.1"/>
    <property type="molecule type" value="Genomic_DNA"/>
</dbReference>
<dbReference type="RefSeq" id="NP_845002.1">
    <property type="nucleotide sequence ID" value="NC_003997.3"/>
</dbReference>
<dbReference type="RefSeq" id="WP_001081093.1">
    <property type="nucleotide sequence ID" value="NZ_WXXH01000192.1"/>
</dbReference>
<dbReference type="RefSeq" id="YP_028720.1">
    <property type="nucleotide sequence ID" value="NC_005945.1"/>
</dbReference>
<dbReference type="SMR" id="Q81PZ9"/>
<dbReference type="STRING" id="261594.GBAA_2640"/>
<dbReference type="DNASU" id="1085791"/>
<dbReference type="GeneID" id="45022492"/>
<dbReference type="KEGG" id="ban:BA_2640"/>
<dbReference type="KEGG" id="banh:HYU01_13115"/>
<dbReference type="KEGG" id="bar:GBAA_2640"/>
<dbReference type="KEGG" id="bat:BAS2460"/>
<dbReference type="PATRIC" id="fig|198094.11.peg.2622"/>
<dbReference type="eggNOG" id="COG4720">
    <property type="taxonomic scope" value="Bacteria"/>
</dbReference>
<dbReference type="HOGENOM" id="CLU_120023_0_0_9"/>
<dbReference type="OMA" id="WWSWVIA"/>
<dbReference type="OrthoDB" id="4550662at2"/>
<dbReference type="Proteomes" id="UP000000427">
    <property type="component" value="Chromosome"/>
</dbReference>
<dbReference type="Proteomes" id="UP000000594">
    <property type="component" value="Chromosome"/>
</dbReference>
<dbReference type="GO" id="GO:0005886">
    <property type="term" value="C:plasma membrane"/>
    <property type="evidence" value="ECO:0007669"/>
    <property type="project" value="UniProtKB-SubCell"/>
</dbReference>
<dbReference type="Gene3D" id="1.10.1760.20">
    <property type="match status" value="1"/>
</dbReference>
<dbReference type="HAMAP" id="MF_01572">
    <property type="entry name" value="UPF0397"/>
    <property type="match status" value="1"/>
</dbReference>
<dbReference type="InterPro" id="IPR009825">
    <property type="entry name" value="ECF_substrate-spec-like"/>
</dbReference>
<dbReference type="InterPro" id="IPR022914">
    <property type="entry name" value="UPF0397"/>
</dbReference>
<dbReference type="NCBIfam" id="NF010182">
    <property type="entry name" value="PRK13661.1"/>
    <property type="match status" value="1"/>
</dbReference>
<dbReference type="PANTHER" id="PTHR37815">
    <property type="entry name" value="UPF0397 PROTEIN BC_2624-RELATED"/>
    <property type="match status" value="1"/>
</dbReference>
<dbReference type="PANTHER" id="PTHR37815:SF3">
    <property type="entry name" value="UPF0397 PROTEIN SPR0429"/>
    <property type="match status" value="1"/>
</dbReference>
<dbReference type="Pfam" id="PF07155">
    <property type="entry name" value="ECF-ribofla_trS"/>
    <property type="match status" value="1"/>
</dbReference>
<organism>
    <name type="scientific">Bacillus anthracis</name>
    <dbReference type="NCBI Taxonomy" id="1392"/>
    <lineage>
        <taxon>Bacteria</taxon>
        <taxon>Bacillati</taxon>
        <taxon>Bacillota</taxon>
        <taxon>Bacilli</taxon>
        <taxon>Bacillales</taxon>
        <taxon>Bacillaceae</taxon>
        <taxon>Bacillus</taxon>
        <taxon>Bacillus cereus group</taxon>
    </lineage>
</organism>
<comment type="subcellular location">
    <subcellularLocation>
        <location evidence="1">Cell membrane</location>
        <topology evidence="1">Multi-pass membrane protein</topology>
    </subcellularLocation>
</comment>
<comment type="similarity">
    <text evidence="1">Belongs to the UPF0397 family.</text>
</comment>
<reference key="1">
    <citation type="journal article" date="2003" name="Nature">
        <title>The genome sequence of Bacillus anthracis Ames and comparison to closely related bacteria.</title>
        <authorList>
            <person name="Read T.D."/>
            <person name="Peterson S.N."/>
            <person name="Tourasse N.J."/>
            <person name="Baillie L.W."/>
            <person name="Paulsen I.T."/>
            <person name="Nelson K.E."/>
            <person name="Tettelin H."/>
            <person name="Fouts D.E."/>
            <person name="Eisen J.A."/>
            <person name="Gill S.R."/>
            <person name="Holtzapple E.K."/>
            <person name="Okstad O.A."/>
            <person name="Helgason E."/>
            <person name="Rilstone J."/>
            <person name="Wu M."/>
            <person name="Kolonay J.F."/>
            <person name="Beanan M.J."/>
            <person name="Dodson R.J."/>
            <person name="Brinkac L.M."/>
            <person name="Gwinn M.L."/>
            <person name="DeBoy R.T."/>
            <person name="Madpu R."/>
            <person name="Daugherty S.C."/>
            <person name="Durkin A.S."/>
            <person name="Haft D.H."/>
            <person name="Nelson W.C."/>
            <person name="Peterson J.D."/>
            <person name="Pop M."/>
            <person name="Khouri H.M."/>
            <person name="Radune D."/>
            <person name="Benton J.L."/>
            <person name="Mahamoud Y."/>
            <person name="Jiang L."/>
            <person name="Hance I.R."/>
            <person name="Weidman J.F."/>
            <person name="Berry K.J."/>
            <person name="Plaut R.D."/>
            <person name="Wolf A.M."/>
            <person name="Watkins K.L."/>
            <person name="Nierman W.C."/>
            <person name="Hazen A."/>
            <person name="Cline R.T."/>
            <person name="Redmond C."/>
            <person name="Thwaite J.E."/>
            <person name="White O."/>
            <person name="Salzberg S.L."/>
            <person name="Thomason B."/>
            <person name="Friedlander A.M."/>
            <person name="Koehler T.M."/>
            <person name="Hanna P.C."/>
            <person name="Kolstoe A.-B."/>
            <person name="Fraser C.M."/>
        </authorList>
    </citation>
    <scope>NUCLEOTIDE SEQUENCE [LARGE SCALE GENOMIC DNA]</scope>
    <source>
        <strain>Ames / isolate Porton</strain>
    </source>
</reference>
<reference key="2">
    <citation type="submission" date="2004-01" db="EMBL/GenBank/DDBJ databases">
        <title>Complete genome sequence of Bacillus anthracis Sterne.</title>
        <authorList>
            <person name="Brettin T.S."/>
            <person name="Bruce D."/>
            <person name="Challacombe J.F."/>
            <person name="Gilna P."/>
            <person name="Han C."/>
            <person name="Hill K."/>
            <person name="Hitchcock P."/>
            <person name="Jackson P."/>
            <person name="Keim P."/>
            <person name="Longmire J."/>
            <person name="Lucas S."/>
            <person name="Okinaka R."/>
            <person name="Richardson P."/>
            <person name="Rubin E."/>
            <person name="Tice H."/>
        </authorList>
    </citation>
    <scope>NUCLEOTIDE SEQUENCE [LARGE SCALE GENOMIC DNA]</scope>
    <source>
        <strain>Sterne</strain>
    </source>
</reference>
<reference key="3">
    <citation type="journal article" date="2009" name="J. Bacteriol.">
        <title>The complete genome sequence of Bacillus anthracis Ames 'Ancestor'.</title>
        <authorList>
            <person name="Ravel J."/>
            <person name="Jiang L."/>
            <person name="Stanley S.T."/>
            <person name="Wilson M.R."/>
            <person name="Decker R.S."/>
            <person name="Read T.D."/>
            <person name="Worsham P."/>
            <person name="Keim P.S."/>
            <person name="Salzberg S.L."/>
            <person name="Fraser-Liggett C.M."/>
            <person name="Rasko D.A."/>
        </authorList>
    </citation>
    <scope>NUCLEOTIDE SEQUENCE [LARGE SCALE GENOMIC DNA]</scope>
    <source>
        <strain>Ames ancestor</strain>
    </source>
</reference>
<gene>
    <name type="ordered locus">BA_2640</name>
    <name type="ordered locus">GBAA_2640</name>
    <name type="ordered locus">BAS2460</name>
</gene>
<proteinExistence type="inferred from homology"/>
<keyword id="KW-1003">Cell membrane</keyword>
<keyword id="KW-0472">Membrane</keyword>
<keyword id="KW-1185">Reference proteome</keyword>
<keyword id="KW-0812">Transmembrane</keyword>
<keyword id="KW-1133">Transmembrane helix</keyword>
<feature type="chain" id="PRO_0000260784" description="UPF0397 protein BA_2640/GBAA_2640/BAS2460">
    <location>
        <begin position="1"/>
        <end position="182"/>
    </location>
</feature>
<feature type="transmembrane region" description="Helical" evidence="1">
    <location>
        <begin position="9"/>
        <end position="29"/>
    </location>
</feature>
<feature type="transmembrane region" description="Helical" evidence="1">
    <location>
        <begin position="40"/>
        <end position="60"/>
    </location>
</feature>
<feature type="transmembrane region" description="Helical" evidence="1">
    <location>
        <begin position="71"/>
        <end position="91"/>
    </location>
</feature>
<feature type="transmembrane region" description="Helical" evidence="1">
    <location>
        <begin position="114"/>
        <end position="134"/>
    </location>
</feature>
<feature type="transmembrane region" description="Helical" evidence="1">
    <location>
        <begin position="142"/>
        <end position="162"/>
    </location>
</feature>
<name>Y2640_BACAN</name>
<sequence>MNRLSTKLVVAIGIGSALYGILGLWGFSIAPNTFIKPALAILTVFGALFGPVAGLLIGLIGHTVTDTIAGWSIWWGWVISSGIIGFTMGFIQKRVGFSVKNGTYNKGDISYLAITGLIGIVIAIIFAGAFDIIVMGEPFDKIVIQVLGATIADVIVFLVLGLPITIGLAKSNKKHTHLKIEK</sequence>
<accession>Q81PZ9</accession>
<accession>Q6HY68</accession>
<accession>Q6KS83</accession>
<protein>
    <recommendedName>
        <fullName evidence="1">UPF0397 protein BA_2640/GBAA_2640/BAS2460</fullName>
    </recommendedName>
</protein>